<accession>P32943</accession>
<accession>D6VUP0</accession>
<reference key="1">
    <citation type="journal article" date="1993" name="Genes Dev.">
        <title>CLB5 and CLB6, a new pair of B cyclins involved in DNA replication in Saccharomyces cerevisiae.</title>
        <authorList>
            <person name="Schwob E."/>
            <person name="Nasmyth K."/>
        </authorList>
    </citation>
    <scope>NUCLEOTIDE SEQUENCE [GENOMIC DNA]</scope>
    <source>
        <strain>K1107</strain>
    </source>
</reference>
<reference key="2">
    <citation type="journal article" date="1993" name="EMBO J.">
        <title>A new pair of B-type cyclins from Saccharomyces cerevisiae that function early in the cell cycle.</title>
        <authorList>
            <person name="Kuehne C."/>
            <person name="Linder P."/>
        </authorList>
    </citation>
    <scope>NUCLEOTIDE SEQUENCE [GENOMIC DNA]</scope>
</reference>
<reference key="3">
    <citation type="submission" date="1994-01" db="EMBL/GenBank/DDBJ databases">
        <authorList>
            <person name="Kuehne C."/>
        </authorList>
    </citation>
    <scope>SEQUENCE REVISION TO C-TERMINUS</scope>
</reference>
<reference key="4">
    <citation type="journal article" date="1996" name="Yeast">
        <title>The sequence of a 23.4 kb segment on the right arm of chromosome VII from Saccharomyces cerevisiae reveals CLB6, SPT6, RP28A and NUP57 genes, a Ty3 element and 11 new open reading frames.</title>
        <authorList>
            <person name="Hansen M."/>
            <person name="Albers M."/>
            <person name="Backes U."/>
            <person name="Coblenz A."/>
            <person name="Leuther H."/>
            <person name="Neu R."/>
            <person name="Schreer A."/>
            <person name="Schaefer B."/>
            <person name="Zimmermann M."/>
            <person name="Wolf K."/>
        </authorList>
    </citation>
    <scope>NUCLEOTIDE SEQUENCE [GENOMIC DNA]</scope>
</reference>
<reference key="5">
    <citation type="journal article" date="1997" name="Nature">
        <title>The nucleotide sequence of Saccharomyces cerevisiae chromosome VII.</title>
        <authorList>
            <person name="Tettelin H."/>
            <person name="Agostoni-Carbone M.L."/>
            <person name="Albermann K."/>
            <person name="Albers M."/>
            <person name="Arroyo J."/>
            <person name="Backes U."/>
            <person name="Barreiros T."/>
            <person name="Bertani I."/>
            <person name="Bjourson A.J."/>
            <person name="Brueckner M."/>
            <person name="Bruschi C.V."/>
            <person name="Carignani G."/>
            <person name="Castagnoli L."/>
            <person name="Cerdan E."/>
            <person name="Clemente M.L."/>
            <person name="Coblenz A."/>
            <person name="Coglievina M."/>
            <person name="Coissac E."/>
            <person name="Defoor E."/>
            <person name="Del Bino S."/>
            <person name="Delius H."/>
            <person name="Delneri D."/>
            <person name="de Wergifosse P."/>
            <person name="Dujon B."/>
            <person name="Durand P."/>
            <person name="Entian K.-D."/>
            <person name="Eraso P."/>
            <person name="Escribano V."/>
            <person name="Fabiani L."/>
            <person name="Fartmann B."/>
            <person name="Feroli F."/>
            <person name="Feuermann M."/>
            <person name="Frontali L."/>
            <person name="Garcia-Gonzalez M."/>
            <person name="Garcia-Saez M.I."/>
            <person name="Goffeau A."/>
            <person name="Guerreiro P."/>
            <person name="Hani J."/>
            <person name="Hansen M."/>
            <person name="Hebling U."/>
            <person name="Hernandez K."/>
            <person name="Heumann K."/>
            <person name="Hilger F."/>
            <person name="Hofmann B."/>
            <person name="Indge K.J."/>
            <person name="James C.M."/>
            <person name="Klima R."/>
            <person name="Koetter P."/>
            <person name="Kramer B."/>
            <person name="Kramer W."/>
            <person name="Lauquin G."/>
            <person name="Leuther H."/>
            <person name="Louis E.J."/>
            <person name="Maillier E."/>
            <person name="Marconi A."/>
            <person name="Martegani E."/>
            <person name="Mazon M.J."/>
            <person name="Mazzoni C."/>
            <person name="McReynolds A.D.K."/>
            <person name="Melchioretto P."/>
            <person name="Mewes H.-W."/>
            <person name="Minenkova O."/>
            <person name="Mueller-Auer S."/>
            <person name="Nawrocki A."/>
            <person name="Netter P."/>
            <person name="Neu R."/>
            <person name="Nombela C."/>
            <person name="Oliver S.G."/>
            <person name="Panzeri L."/>
            <person name="Paoluzi S."/>
            <person name="Plevani P."/>
            <person name="Portetelle D."/>
            <person name="Portillo F."/>
            <person name="Potier S."/>
            <person name="Purnelle B."/>
            <person name="Rieger M."/>
            <person name="Riles L."/>
            <person name="Rinaldi T."/>
            <person name="Robben J."/>
            <person name="Rodrigues-Pousada C."/>
            <person name="Rodriguez-Belmonte E."/>
            <person name="Rodriguez-Torres A.M."/>
            <person name="Rose M."/>
            <person name="Ruzzi M."/>
            <person name="Saliola M."/>
            <person name="Sanchez-Perez M."/>
            <person name="Schaefer B."/>
            <person name="Schaefer M."/>
            <person name="Scharfe M."/>
            <person name="Schmidheini T."/>
            <person name="Schreer A."/>
            <person name="Skala J."/>
            <person name="Souciet J.-L."/>
            <person name="Steensma H.Y."/>
            <person name="Talla E."/>
            <person name="Thierry A."/>
            <person name="Vandenbol M."/>
            <person name="van der Aart Q.J.M."/>
            <person name="Van Dyck L."/>
            <person name="Vanoni M."/>
            <person name="Verhasselt P."/>
            <person name="Voet M."/>
            <person name="Volckaert G."/>
            <person name="Wambutt R."/>
            <person name="Watson M.D."/>
            <person name="Weber N."/>
            <person name="Wedler E."/>
            <person name="Wedler H."/>
            <person name="Wipfli P."/>
            <person name="Wolf K."/>
            <person name="Wright L.F."/>
            <person name="Zaccaria P."/>
            <person name="Zimmermann M."/>
            <person name="Zollner A."/>
            <person name="Kleine K."/>
        </authorList>
    </citation>
    <scope>NUCLEOTIDE SEQUENCE [LARGE SCALE GENOMIC DNA]</scope>
    <source>
        <strain>ATCC 204508 / S288c</strain>
    </source>
</reference>
<reference key="6">
    <citation type="journal article" date="2014" name="G3 (Bethesda)">
        <title>The reference genome sequence of Saccharomyces cerevisiae: Then and now.</title>
        <authorList>
            <person name="Engel S.R."/>
            <person name="Dietrich F.S."/>
            <person name="Fisk D.G."/>
            <person name="Binkley G."/>
            <person name="Balakrishnan R."/>
            <person name="Costanzo M.C."/>
            <person name="Dwight S.S."/>
            <person name="Hitz B.C."/>
            <person name="Karra K."/>
            <person name="Nash R.S."/>
            <person name="Weng S."/>
            <person name="Wong E.D."/>
            <person name="Lloyd P."/>
            <person name="Skrzypek M.S."/>
            <person name="Miyasato S.R."/>
            <person name="Simison M."/>
            <person name="Cherry J.M."/>
        </authorList>
    </citation>
    <scope>GENOME REANNOTATION</scope>
    <source>
        <strain>ATCC 204508 / S288c</strain>
    </source>
</reference>
<reference key="7">
    <citation type="journal article" date="2007" name="Genome Res.">
        <title>Approaching a complete repository of sequence-verified protein-encoding clones for Saccharomyces cerevisiae.</title>
        <authorList>
            <person name="Hu Y."/>
            <person name="Rolfs A."/>
            <person name="Bhullar B."/>
            <person name="Murthy T.V.S."/>
            <person name="Zhu C."/>
            <person name="Berger M.F."/>
            <person name="Camargo A.A."/>
            <person name="Kelley F."/>
            <person name="McCarron S."/>
            <person name="Jepson D."/>
            <person name="Richardson A."/>
            <person name="Raphael J."/>
            <person name="Moreira D."/>
            <person name="Taycher E."/>
            <person name="Zuo D."/>
            <person name="Mohr S."/>
            <person name="Kane M.F."/>
            <person name="Williamson J."/>
            <person name="Simpson A.J.G."/>
            <person name="Bulyk M.L."/>
            <person name="Harlow E."/>
            <person name="Marsischky G."/>
            <person name="Kolodner R.D."/>
            <person name="LaBaer J."/>
        </authorList>
    </citation>
    <scope>NUCLEOTIDE SEQUENCE [GENOMIC DNA]</scope>
    <source>
        <strain>ATCC 204508 / S288c</strain>
    </source>
</reference>
<protein>
    <recommendedName>
        <fullName>S-phase entry cyclin-6</fullName>
    </recommendedName>
</protein>
<feature type="chain" id="PRO_0000080409" description="S-phase entry cyclin-6">
    <location>
        <begin position="1"/>
        <end position="380"/>
    </location>
</feature>
<feature type="region of interest" description="Disordered" evidence="1">
    <location>
        <begin position="63"/>
        <end position="91"/>
    </location>
</feature>
<feature type="sequence conflict" description="In Ref. 2; CAA51408." evidence="2" ref="2">
    <original>T</original>
    <variation>S</variation>
    <location>
        <position position="77"/>
    </location>
</feature>
<feature type="sequence conflict" description="In Ref. 2; CAA51408." evidence="2" ref="2">
    <original>P</original>
    <variation>S</variation>
    <location>
        <position position="92"/>
    </location>
</feature>
<feature type="sequence conflict" description="In Ref. 2; CAA51408." evidence="2" ref="2">
    <original>I</original>
    <variation>M</variation>
    <location>
        <position position="109"/>
    </location>
</feature>
<feature type="sequence conflict" description="In Ref. 1; CAA49894." evidence="2" ref="1">
    <original>F</original>
    <variation>L</variation>
    <location>
        <position position="223"/>
    </location>
</feature>
<proteinExistence type="evidence at protein level"/>
<name>CGS6_YEAST</name>
<comment type="function">
    <text>Involved in G1/S and or S phase progression. Interacts with CDC28.</text>
</comment>
<comment type="interaction">
    <interactant intactId="EBI-2049771">
        <id>P32943</id>
    </interactant>
    <interactant intactId="EBI-4253">
        <id>P00546</id>
        <label>CDC28</label>
    </interactant>
    <organismsDiffer>false</organismsDiffer>
    <experiments>3</experiments>
</comment>
<comment type="developmental stage">
    <text>Maximally expressed just before cell cycle start.</text>
</comment>
<comment type="similarity">
    <text evidence="2">Belongs to the cyclin family. Cyclin AB subfamily.</text>
</comment>
<evidence type="ECO:0000256" key="1">
    <source>
        <dbReference type="SAM" id="MobiDB-lite"/>
    </source>
</evidence>
<evidence type="ECO:0000305" key="2"/>
<keyword id="KW-0131">Cell cycle</keyword>
<keyword id="KW-0132">Cell division</keyword>
<keyword id="KW-0195">Cyclin</keyword>
<keyword id="KW-1185">Reference proteome</keyword>
<sequence>MNCIPSPISERKIQINNEDCIGKENAFHTIPRESSINLTPHSTNEKKVLSEVNSNKIDSLQLPRGKLQRDSTHLEKTRKRQLSNDSTDPIEPKTVKKIKCHQWKNLDSIEMDDPFMVAEYTDSIFSHLYEKEIQMLPTHNYLMDTQSPYHLKSSMRALLIDWLVEVHEKFHCLPETLFLAINLLDRFLSQNVVKLNKLQLLCITCLFIACKFEEVKLPKITNFAYVTDGAATVEGIRKAELFVLSSLGYNISLPNPLNFIRRISKADNYCIETRNMAKFIMEYSICCNKFIHLKPSYLAAMSMYIARKIKNENSKWDETFIHYSGGIDIESDPAFKDFISELVEDIAVPDTNLDSLRLKYKKPKHGMVYFKVFDWCKQKR</sequence>
<organism>
    <name type="scientific">Saccharomyces cerevisiae (strain ATCC 204508 / S288c)</name>
    <name type="common">Baker's yeast</name>
    <dbReference type="NCBI Taxonomy" id="559292"/>
    <lineage>
        <taxon>Eukaryota</taxon>
        <taxon>Fungi</taxon>
        <taxon>Dikarya</taxon>
        <taxon>Ascomycota</taxon>
        <taxon>Saccharomycotina</taxon>
        <taxon>Saccharomycetes</taxon>
        <taxon>Saccharomycetales</taxon>
        <taxon>Saccharomycetaceae</taxon>
        <taxon>Saccharomyces</taxon>
    </lineage>
</organism>
<dbReference type="EMBL" id="X70436">
    <property type="protein sequence ID" value="CAA49894.1"/>
    <property type="molecule type" value="Genomic_DNA"/>
</dbReference>
<dbReference type="EMBL" id="X72890">
    <property type="protein sequence ID" value="CAA51408.1"/>
    <property type="molecule type" value="Genomic_DNA"/>
</dbReference>
<dbReference type="EMBL" id="Z72894">
    <property type="protein sequence ID" value="CAA97113.1"/>
    <property type="molecule type" value="Genomic_DNA"/>
</dbReference>
<dbReference type="EMBL" id="AY693095">
    <property type="protein sequence ID" value="AAT93114.1"/>
    <property type="molecule type" value="Genomic_DNA"/>
</dbReference>
<dbReference type="EMBL" id="BK006941">
    <property type="protein sequence ID" value="DAA08201.1"/>
    <property type="molecule type" value="Genomic_DNA"/>
</dbReference>
<dbReference type="PIR" id="S64417">
    <property type="entry name" value="S64417"/>
</dbReference>
<dbReference type="RefSeq" id="NP_011623.3">
    <property type="nucleotide sequence ID" value="NM_001181238.3"/>
</dbReference>
<dbReference type="SMR" id="P32943"/>
<dbReference type="BioGRID" id="33353">
    <property type="interactions" value="104"/>
</dbReference>
<dbReference type="ComplexPortal" id="CPX-339">
    <property type="entry name" value="CLB6-CDC28 kinase complex"/>
</dbReference>
<dbReference type="FunCoup" id="P32943">
    <property type="interactions" value="679"/>
</dbReference>
<dbReference type="IntAct" id="P32943">
    <property type="interactions" value="8"/>
</dbReference>
<dbReference type="MINT" id="P32943"/>
<dbReference type="STRING" id="4932.YGR109C"/>
<dbReference type="iPTMnet" id="P32943"/>
<dbReference type="PaxDb" id="4932-YGR109C"/>
<dbReference type="PeptideAtlas" id="P32943"/>
<dbReference type="EnsemblFungi" id="YGR109C_mRNA">
    <property type="protein sequence ID" value="YGR109C"/>
    <property type="gene ID" value="YGR109C"/>
</dbReference>
<dbReference type="GeneID" id="853003"/>
<dbReference type="KEGG" id="sce:YGR109C"/>
<dbReference type="AGR" id="SGD:S000003341"/>
<dbReference type="SGD" id="S000003341">
    <property type="gene designation" value="CLB6"/>
</dbReference>
<dbReference type="VEuPathDB" id="FungiDB:YGR109C"/>
<dbReference type="eggNOG" id="KOG0653">
    <property type="taxonomic scope" value="Eukaryota"/>
</dbReference>
<dbReference type="GeneTree" id="ENSGT00940000176489"/>
<dbReference type="HOGENOM" id="CLU_020695_12_4_1"/>
<dbReference type="InParanoid" id="P32943"/>
<dbReference type="OMA" id="IMEYSIC"/>
<dbReference type="OrthoDB" id="5590282at2759"/>
<dbReference type="BioCyc" id="YEAST:G3O-30818-MONOMER"/>
<dbReference type="BioGRID-ORCS" id="853003">
    <property type="hits" value="0 hits in 10 CRISPR screens"/>
</dbReference>
<dbReference type="PRO" id="PR:P32943"/>
<dbReference type="Proteomes" id="UP000002311">
    <property type="component" value="Chromosome VII"/>
</dbReference>
<dbReference type="RNAct" id="P32943">
    <property type="molecule type" value="protein"/>
</dbReference>
<dbReference type="GO" id="GO:0000307">
    <property type="term" value="C:cyclin-dependent protein kinase holoenzyme complex"/>
    <property type="evidence" value="ECO:0000353"/>
    <property type="project" value="ComplexPortal"/>
</dbReference>
<dbReference type="GO" id="GO:0005737">
    <property type="term" value="C:cytoplasm"/>
    <property type="evidence" value="ECO:0000318"/>
    <property type="project" value="GO_Central"/>
</dbReference>
<dbReference type="GO" id="GO:0005815">
    <property type="term" value="C:microtubule organizing center"/>
    <property type="evidence" value="ECO:0000318"/>
    <property type="project" value="GO_Central"/>
</dbReference>
<dbReference type="GO" id="GO:0005634">
    <property type="term" value="C:nucleus"/>
    <property type="evidence" value="ECO:0000318"/>
    <property type="project" value="GO_Central"/>
</dbReference>
<dbReference type="GO" id="GO:0016538">
    <property type="term" value="F:cyclin-dependent protein serine/threonine kinase regulator activity"/>
    <property type="evidence" value="ECO:0000314"/>
    <property type="project" value="SGD"/>
</dbReference>
<dbReference type="GO" id="GO:0051301">
    <property type="term" value="P:cell division"/>
    <property type="evidence" value="ECO:0007669"/>
    <property type="project" value="UniProtKB-KW"/>
</dbReference>
<dbReference type="GO" id="GO:0000082">
    <property type="term" value="P:G1/S transition of mitotic cell cycle"/>
    <property type="evidence" value="ECO:0000315"/>
    <property type="project" value="SGD"/>
</dbReference>
<dbReference type="GO" id="GO:0045740">
    <property type="term" value="P:positive regulation of DNA replication"/>
    <property type="evidence" value="ECO:0000316"/>
    <property type="project" value="SGD"/>
</dbReference>
<dbReference type="GO" id="GO:0006279">
    <property type="term" value="P:premeiotic DNA replication"/>
    <property type="evidence" value="ECO:0000315"/>
    <property type="project" value="SGD"/>
</dbReference>
<dbReference type="GO" id="GO:0006355">
    <property type="term" value="P:regulation of DNA-templated transcription"/>
    <property type="evidence" value="ECO:0000315"/>
    <property type="project" value="ComplexPortal"/>
</dbReference>
<dbReference type="GO" id="GO:0032880">
    <property type="term" value="P:regulation of protein localization"/>
    <property type="evidence" value="ECO:0000315"/>
    <property type="project" value="SGD"/>
</dbReference>
<dbReference type="GO" id="GO:0007089">
    <property type="term" value="P:traversing start control point of mitotic cell cycle"/>
    <property type="evidence" value="ECO:0000318"/>
    <property type="project" value="GO_Central"/>
</dbReference>
<dbReference type="CDD" id="cd20568">
    <property type="entry name" value="CYCLIN_CLBs_yeast_rpt1"/>
    <property type="match status" value="1"/>
</dbReference>
<dbReference type="CDD" id="cd20512">
    <property type="entry name" value="CYCLIN_CLBs_yeast_rpt2"/>
    <property type="match status" value="1"/>
</dbReference>
<dbReference type="FunFam" id="1.10.472.10:FF:000001">
    <property type="entry name" value="G2/mitotic-specific cyclin"/>
    <property type="match status" value="1"/>
</dbReference>
<dbReference type="FunFam" id="1.10.472.10:FF:000005">
    <property type="entry name" value="G2/mitotic-specific cyclin B"/>
    <property type="match status" value="1"/>
</dbReference>
<dbReference type="Gene3D" id="1.10.472.10">
    <property type="entry name" value="Cyclin-like"/>
    <property type="match status" value="2"/>
</dbReference>
<dbReference type="InterPro" id="IPR039361">
    <property type="entry name" value="Cyclin"/>
</dbReference>
<dbReference type="InterPro" id="IPR013763">
    <property type="entry name" value="Cyclin-like_dom"/>
</dbReference>
<dbReference type="InterPro" id="IPR036915">
    <property type="entry name" value="Cyclin-like_sf"/>
</dbReference>
<dbReference type="InterPro" id="IPR046965">
    <property type="entry name" value="Cyclin_A/B-like"/>
</dbReference>
<dbReference type="InterPro" id="IPR004367">
    <property type="entry name" value="Cyclin_C-dom"/>
</dbReference>
<dbReference type="InterPro" id="IPR006671">
    <property type="entry name" value="Cyclin_N"/>
</dbReference>
<dbReference type="InterPro" id="IPR048258">
    <property type="entry name" value="Cyclins_cyclin-box"/>
</dbReference>
<dbReference type="PANTHER" id="PTHR10177">
    <property type="entry name" value="CYCLINS"/>
    <property type="match status" value="1"/>
</dbReference>
<dbReference type="Pfam" id="PF02984">
    <property type="entry name" value="Cyclin_C"/>
    <property type="match status" value="1"/>
</dbReference>
<dbReference type="Pfam" id="PF00134">
    <property type="entry name" value="Cyclin_N"/>
    <property type="match status" value="1"/>
</dbReference>
<dbReference type="PIRSF" id="PIRSF001771">
    <property type="entry name" value="Cyclin_A_B_D_E"/>
    <property type="match status" value="1"/>
</dbReference>
<dbReference type="SMART" id="SM00385">
    <property type="entry name" value="CYCLIN"/>
    <property type="match status" value="2"/>
</dbReference>
<dbReference type="SMART" id="SM01332">
    <property type="entry name" value="Cyclin_C"/>
    <property type="match status" value="1"/>
</dbReference>
<dbReference type="SUPFAM" id="SSF47954">
    <property type="entry name" value="Cyclin-like"/>
    <property type="match status" value="2"/>
</dbReference>
<dbReference type="PROSITE" id="PS00292">
    <property type="entry name" value="CYCLINS"/>
    <property type="match status" value="1"/>
</dbReference>
<gene>
    <name type="primary">CLB6</name>
    <name type="ordered locus">YGR109C</name>
    <name type="ORF">G5970</name>
</gene>